<protein>
    <recommendedName>
        <fullName>B3 domain-containing protein REM20</fullName>
    </recommendedName>
    <alternativeName>
        <fullName>Protein REPRODUCTIVE MERISTEM 20</fullName>
    </alternativeName>
</protein>
<comment type="interaction">
    <interactant intactId="EBI-15192159">
        <id>Q8LAV5</id>
    </interactant>
    <interactant intactId="EBI-15192157">
        <id>P46603</id>
        <label>HAT9</label>
    </interactant>
    <organismsDiffer>false</organismsDiffer>
    <experiments>3</experiments>
</comment>
<comment type="subcellular location">
    <subcellularLocation>
        <location evidence="1">Nucleus</location>
    </subcellularLocation>
</comment>
<comment type="sequence caution" evidence="3">
    <conflict type="erroneous gene model prediction">
        <sequence resource="EMBL-CDS" id="CAB67638"/>
    </conflict>
</comment>
<reference key="1">
    <citation type="journal article" date="2000" name="Nature">
        <title>Sequence and analysis of chromosome 3 of the plant Arabidopsis thaliana.</title>
        <authorList>
            <person name="Salanoubat M."/>
            <person name="Lemcke K."/>
            <person name="Rieger M."/>
            <person name="Ansorge W."/>
            <person name="Unseld M."/>
            <person name="Fartmann B."/>
            <person name="Valle G."/>
            <person name="Bloecker H."/>
            <person name="Perez-Alonso M."/>
            <person name="Obermaier B."/>
            <person name="Delseny M."/>
            <person name="Boutry M."/>
            <person name="Grivell L.A."/>
            <person name="Mache R."/>
            <person name="Puigdomenech P."/>
            <person name="De Simone V."/>
            <person name="Choisne N."/>
            <person name="Artiguenave F."/>
            <person name="Robert C."/>
            <person name="Brottier P."/>
            <person name="Wincker P."/>
            <person name="Cattolico L."/>
            <person name="Weissenbach J."/>
            <person name="Saurin W."/>
            <person name="Quetier F."/>
            <person name="Schaefer M."/>
            <person name="Mueller-Auer S."/>
            <person name="Gabel C."/>
            <person name="Fuchs M."/>
            <person name="Benes V."/>
            <person name="Wurmbach E."/>
            <person name="Drzonek H."/>
            <person name="Erfle H."/>
            <person name="Jordan N."/>
            <person name="Bangert S."/>
            <person name="Wiedelmann R."/>
            <person name="Kranz H."/>
            <person name="Voss H."/>
            <person name="Holland R."/>
            <person name="Brandt P."/>
            <person name="Nyakatura G."/>
            <person name="Vezzi A."/>
            <person name="D'Angelo M."/>
            <person name="Pallavicini A."/>
            <person name="Toppo S."/>
            <person name="Simionati B."/>
            <person name="Conrad A."/>
            <person name="Hornischer K."/>
            <person name="Kauer G."/>
            <person name="Loehnert T.-H."/>
            <person name="Nordsiek G."/>
            <person name="Reichelt J."/>
            <person name="Scharfe M."/>
            <person name="Schoen O."/>
            <person name="Bargues M."/>
            <person name="Terol J."/>
            <person name="Climent J."/>
            <person name="Navarro P."/>
            <person name="Collado C."/>
            <person name="Perez-Perez A."/>
            <person name="Ottenwaelder B."/>
            <person name="Duchemin D."/>
            <person name="Cooke R."/>
            <person name="Laudie M."/>
            <person name="Berger-Llauro C."/>
            <person name="Purnelle B."/>
            <person name="Masuy D."/>
            <person name="de Haan M."/>
            <person name="Maarse A.C."/>
            <person name="Alcaraz J.-P."/>
            <person name="Cottet A."/>
            <person name="Casacuberta E."/>
            <person name="Monfort A."/>
            <person name="Argiriou A."/>
            <person name="Flores M."/>
            <person name="Liguori R."/>
            <person name="Vitale D."/>
            <person name="Mannhaupt G."/>
            <person name="Haase D."/>
            <person name="Schoof H."/>
            <person name="Rudd S."/>
            <person name="Zaccaria P."/>
            <person name="Mewes H.-W."/>
            <person name="Mayer K.F.X."/>
            <person name="Kaul S."/>
            <person name="Town C.D."/>
            <person name="Koo H.L."/>
            <person name="Tallon L.J."/>
            <person name="Jenkins J."/>
            <person name="Rooney T."/>
            <person name="Rizzo M."/>
            <person name="Walts A."/>
            <person name="Utterback T."/>
            <person name="Fujii C.Y."/>
            <person name="Shea T.P."/>
            <person name="Creasy T.H."/>
            <person name="Haas B."/>
            <person name="Maiti R."/>
            <person name="Wu D."/>
            <person name="Peterson J."/>
            <person name="Van Aken S."/>
            <person name="Pai G."/>
            <person name="Militscher J."/>
            <person name="Sellers P."/>
            <person name="Gill J.E."/>
            <person name="Feldblyum T.V."/>
            <person name="Preuss D."/>
            <person name="Lin X."/>
            <person name="Nierman W.C."/>
            <person name="Salzberg S.L."/>
            <person name="White O."/>
            <person name="Venter J.C."/>
            <person name="Fraser C.M."/>
            <person name="Kaneko T."/>
            <person name="Nakamura Y."/>
            <person name="Sato S."/>
            <person name="Kato T."/>
            <person name="Asamizu E."/>
            <person name="Sasamoto S."/>
            <person name="Kimura T."/>
            <person name="Idesawa K."/>
            <person name="Kawashima K."/>
            <person name="Kishida Y."/>
            <person name="Kiyokawa C."/>
            <person name="Kohara M."/>
            <person name="Matsumoto M."/>
            <person name="Matsuno A."/>
            <person name="Muraki A."/>
            <person name="Nakayama S."/>
            <person name="Nakazaki N."/>
            <person name="Shinpo S."/>
            <person name="Takeuchi C."/>
            <person name="Wada T."/>
            <person name="Watanabe A."/>
            <person name="Yamada M."/>
            <person name="Yasuda M."/>
            <person name="Tabata S."/>
        </authorList>
    </citation>
    <scope>NUCLEOTIDE SEQUENCE [LARGE SCALE GENOMIC DNA]</scope>
    <source>
        <strain>cv. Columbia</strain>
    </source>
</reference>
<reference key="2">
    <citation type="journal article" date="2017" name="Plant J.">
        <title>Araport11: a complete reannotation of the Arabidopsis thaliana reference genome.</title>
        <authorList>
            <person name="Cheng C.Y."/>
            <person name="Krishnakumar V."/>
            <person name="Chan A.P."/>
            <person name="Thibaud-Nissen F."/>
            <person name="Schobel S."/>
            <person name="Town C.D."/>
        </authorList>
    </citation>
    <scope>GENOME REANNOTATION</scope>
    <source>
        <strain>cv. Columbia</strain>
    </source>
</reference>
<reference key="3">
    <citation type="submission" date="2006-06" db="EMBL/GenBank/DDBJ databases">
        <title>Arabidopsis ORF clone.</title>
        <authorList>
            <person name="Quinitio C."/>
            <person name="Chen H."/>
            <person name="Kim C.J."/>
            <person name="Shinn P."/>
            <person name="Ecker J.R."/>
        </authorList>
    </citation>
    <scope>NUCLEOTIDE SEQUENCE [LARGE SCALE MRNA]</scope>
    <source>
        <strain>cv. Columbia</strain>
    </source>
</reference>
<reference key="4">
    <citation type="submission" date="2009-03" db="EMBL/GenBank/DDBJ databases">
        <title>ORF cloning and analysis of Arabidopsis transcription factor genes.</title>
        <authorList>
            <person name="Fujita M."/>
            <person name="Mizukado S."/>
            <person name="Seki M."/>
            <person name="Shinozaki K."/>
            <person name="Mitsuda N."/>
            <person name="Takiguchi Y."/>
            <person name="Takagi M."/>
        </authorList>
    </citation>
    <scope>NUCLEOTIDE SEQUENCE [LARGE SCALE MRNA]</scope>
</reference>
<reference key="5">
    <citation type="submission" date="2002-03" db="EMBL/GenBank/DDBJ databases">
        <title>Full-length cDNA from Arabidopsis thaliana.</title>
        <authorList>
            <person name="Brover V.V."/>
            <person name="Troukhan M.E."/>
            <person name="Alexandrov N.A."/>
            <person name="Lu Y.-P."/>
            <person name="Flavell R.B."/>
            <person name="Feldmann K.A."/>
        </authorList>
    </citation>
    <scope>NUCLEOTIDE SEQUENCE [LARGE SCALE MRNA]</scope>
</reference>
<reference key="6">
    <citation type="journal article" date="2008" name="Trends Plant Sci.">
        <title>The plant B3 superfamily.</title>
        <authorList>
            <person name="Swaminathan K."/>
            <person name="Peterson K."/>
            <person name="Jack T."/>
        </authorList>
    </citation>
    <scope>GENE FAMILY</scope>
</reference>
<keyword id="KW-0238">DNA-binding</keyword>
<keyword id="KW-0539">Nucleus</keyword>
<keyword id="KW-1185">Reference proteome</keyword>
<keyword id="KW-0804">Transcription</keyword>
<keyword id="KW-0805">Transcription regulation</keyword>
<feature type="chain" id="PRO_0000375113" description="B3 domain-containing protein REM20">
    <location>
        <begin position="1"/>
        <end position="286"/>
    </location>
</feature>
<feature type="DNA-binding region" description="TF-B3" evidence="1">
    <location>
        <begin position="9"/>
        <end position="102"/>
    </location>
</feature>
<feature type="region of interest" description="Disordered" evidence="2">
    <location>
        <begin position="117"/>
        <end position="161"/>
    </location>
</feature>
<feature type="compositionally biased region" description="Acidic residues" evidence="2">
    <location>
        <begin position="119"/>
        <end position="159"/>
    </location>
</feature>
<evidence type="ECO:0000255" key="1">
    <source>
        <dbReference type="PROSITE-ProRule" id="PRU00326"/>
    </source>
</evidence>
<evidence type="ECO:0000256" key="2">
    <source>
        <dbReference type="SAM" id="MobiDB-lite"/>
    </source>
</evidence>
<evidence type="ECO:0000305" key="3"/>
<gene>
    <name type="primary">REM20</name>
    <name type="ordered locus">At3g53310</name>
    <name type="ORF">F4P12.10</name>
</gene>
<dbReference type="EMBL" id="AL132966">
    <property type="protein sequence ID" value="CAB67638.1"/>
    <property type="status" value="ALT_SEQ"/>
    <property type="molecule type" value="Genomic_DNA"/>
</dbReference>
<dbReference type="EMBL" id="CP002686">
    <property type="protein sequence ID" value="AEE79067.1"/>
    <property type="molecule type" value="Genomic_DNA"/>
</dbReference>
<dbReference type="EMBL" id="BT025724">
    <property type="protein sequence ID" value="ABF82627.1"/>
    <property type="molecule type" value="mRNA"/>
</dbReference>
<dbReference type="EMBL" id="AB493647">
    <property type="protein sequence ID" value="BAH30485.1"/>
    <property type="molecule type" value="mRNA"/>
</dbReference>
<dbReference type="EMBL" id="AY087586">
    <property type="protein sequence ID" value="AAM65128.1"/>
    <property type="molecule type" value="mRNA"/>
</dbReference>
<dbReference type="PIR" id="T45871">
    <property type="entry name" value="T45871"/>
</dbReference>
<dbReference type="RefSeq" id="NP_566984.1">
    <property type="nucleotide sequence ID" value="NM_115191.4"/>
</dbReference>
<dbReference type="SMR" id="Q8LAV5"/>
<dbReference type="BioGRID" id="9816">
    <property type="interactions" value="12"/>
</dbReference>
<dbReference type="FunCoup" id="Q8LAV5">
    <property type="interactions" value="4"/>
</dbReference>
<dbReference type="IntAct" id="Q8LAV5">
    <property type="interactions" value="12"/>
</dbReference>
<dbReference type="STRING" id="3702.Q8LAV5"/>
<dbReference type="PaxDb" id="3702-AT3G53310.1"/>
<dbReference type="ProteomicsDB" id="236883"/>
<dbReference type="EnsemblPlants" id="AT3G53310.1">
    <property type="protein sequence ID" value="AT3G53310.1"/>
    <property type="gene ID" value="AT3G53310"/>
</dbReference>
<dbReference type="GeneID" id="824499"/>
<dbReference type="Gramene" id="AT3G53310.1">
    <property type="protein sequence ID" value="AT3G53310.1"/>
    <property type="gene ID" value="AT3G53310"/>
</dbReference>
<dbReference type="KEGG" id="ath:AT3G53310"/>
<dbReference type="Araport" id="AT3G53310"/>
<dbReference type="TAIR" id="AT3G53310"/>
<dbReference type="eggNOG" id="ENOG502S4ID">
    <property type="taxonomic scope" value="Eukaryota"/>
</dbReference>
<dbReference type="HOGENOM" id="CLU_048511_2_0_1"/>
<dbReference type="InParanoid" id="Q8LAV5"/>
<dbReference type="OMA" id="VHTIKIT"/>
<dbReference type="OrthoDB" id="1666376at2759"/>
<dbReference type="PhylomeDB" id="Q8LAV5"/>
<dbReference type="PRO" id="PR:Q8LAV5"/>
<dbReference type="Proteomes" id="UP000006548">
    <property type="component" value="Chromosome 3"/>
</dbReference>
<dbReference type="ExpressionAtlas" id="Q8LAV5">
    <property type="expression patterns" value="baseline and differential"/>
</dbReference>
<dbReference type="GO" id="GO:0005634">
    <property type="term" value="C:nucleus"/>
    <property type="evidence" value="ECO:0000314"/>
    <property type="project" value="TAIR"/>
</dbReference>
<dbReference type="GO" id="GO:0043565">
    <property type="term" value="F:sequence-specific DNA binding"/>
    <property type="evidence" value="ECO:0000314"/>
    <property type="project" value="TAIR"/>
</dbReference>
<dbReference type="GO" id="GO:2000028">
    <property type="term" value="P:regulation of photoperiodism, flowering"/>
    <property type="evidence" value="ECO:0000315"/>
    <property type="project" value="TAIR"/>
</dbReference>
<dbReference type="CDD" id="cd10017">
    <property type="entry name" value="B3_DNA"/>
    <property type="match status" value="1"/>
</dbReference>
<dbReference type="Gene3D" id="2.40.330.10">
    <property type="entry name" value="DNA-binding pseudobarrel domain"/>
    <property type="match status" value="1"/>
</dbReference>
<dbReference type="InterPro" id="IPR003340">
    <property type="entry name" value="B3_DNA-bd"/>
</dbReference>
<dbReference type="InterPro" id="IPR015300">
    <property type="entry name" value="DNA-bd_pseudobarrel_sf"/>
</dbReference>
<dbReference type="InterPro" id="IPR050655">
    <property type="entry name" value="Plant_B3_domain"/>
</dbReference>
<dbReference type="PANTHER" id="PTHR31920">
    <property type="entry name" value="B3 DOMAIN-CONTAINING"/>
    <property type="match status" value="1"/>
</dbReference>
<dbReference type="PANTHER" id="PTHR31920:SF61">
    <property type="entry name" value="B3 DOMAIN-CONTAINING PROTEIN REM20"/>
    <property type="match status" value="1"/>
</dbReference>
<dbReference type="Pfam" id="PF02362">
    <property type="entry name" value="B3"/>
    <property type="match status" value="1"/>
</dbReference>
<dbReference type="SMART" id="SM01019">
    <property type="entry name" value="B3"/>
    <property type="match status" value="2"/>
</dbReference>
<dbReference type="SUPFAM" id="SSF101936">
    <property type="entry name" value="DNA-binding pseudobarrel domain"/>
    <property type="match status" value="2"/>
</dbReference>
<dbReference type="PROSITE" id="PS50863">
    <property type="entry name" value="B3"/>
    <property type="match status" value="1"/>
</dbReference>
<organism>
    <name type="scientific">Arabidopsis thaliana</name>
    <name type="common">Mouse-ear cress</name>
    <dbReference type="NCBI Taxonomy" id="3702"/>
    <lineage>
        <taxon>Eukaryota</taxon>
        <taxon>Viridiplantae</taxon>
        <taxon>Streptophyta</taxon>
        <taxon>Embryophyta</taxon>
        <taxon>Tracheophyta</taxon>
        <taxon>Spermatophyta</taxon>
        <taxon>Magnoliopsida</taxon>
        <taxon>eudicotyledons</taxon>
        <taxon>Gunneridae</taxon>
        <taxon>Pentapetalae</taxon>
        <taxon>rosids</taxon>
        <taxon>malvids</taxon>
        <taxon>Brassicales</taxon>
        <taxon>Brassicaceae</taxon>
        <taxon>Camelineae</taxon>
        <taxon>Arabidopsis</taxon>
    </lineage>
</organism>
<sequence length="286" mass="32618">MADDSELYPRFFKVFLVESASESLMIPLPFMAFLADPLPKTVKLQGLGGKLWTVSLKKISGAAYLTRGWPKFAEEHELKNGEFMTFVYDGHRTFEVSVFDRWGSKEVRAEIQAIPLSDSDSDSVVEDEKDSTDVVEDDDDEDEDEDEDDDGSFDEDEEISQSLYPIDEETATDAAVFEGNLDVEALTNPHFPTTLKNRIYELLIPANVVKDNNLEFGSSIKYIDGEGTLVGLRGKWADKRVCFKGWDRICRRNRLKKHQDTVECELLHDDQKMVHSIRVHVLRRDA</sequence>
<accession>Q8LAV5</accession>
<accession>Q9LFI6</accession>
<proteinExistence type="evidence at protein level"/>
<name>REM20_ARATH</name>